<proteinExistence type="evidence at transcript level"/>
<reference key="1">
    <citation type="submission" date="2006-02" db="EMBL/GenBank/DDBJ databases">
        <authorList>
            <consortium name="NIH - Mammalian Gene Collection (MGC) project"/>
        </authorList>
    </citation>
    <scope>NUCLEOTIDE SEQUENCE [LARGE SCALE MRNA]</scope>
    <source>
        <strain>Hereford</strain>
        <tissue>Heart ventricle</tissue>
    </source>
</reference>
<evidence type="ECO:0000250" key="1">
    <source>
        <dbReference type="UniProtKB" id="Q9NYF3"/>
    </source>
</evidence>
<evidence type="ECO:0000256" key="2">
    <source>
        <dbReference type="SAM" id="MobiDB-lite"/>
    </source>
</evidence>
<evidence type="ECO:0000305" key="3"/>
<dbReference type="EMBL" id="BC114114">
    <property type="protein sequence ID" value="AAI14115.1"/>
    <property type="molecule type" value="mRNA"/>
</dbReference>
<dbReference type="RefSeq" id="NP_001039831.1">
    <property type="nucleotide sequence ID" value="NM_001046366.1"/>
</dbReference>
<dbReference type="RefSeq" id="XP_005209478.1">
    <property type="nucleotide sequence ID" value="XM_005209421.4"/>
</dbReference>
<dbReference type="FunCoup" id="Q29RM2">
    <property type="interactions" value="1988"/>
</dbReference>
<dbReference type="STRING" id="9913.ENSBTAP00000013264"/>
<dbReference type="PaxDb" id="9913-ENSBTAP00000013264"/>
<dbReference type="Ensembl" id="ENSBTAT00000013264.4">
    <property type="protein sequence ID" value="ENSBTAP00000013264.2"/>
    <property type="gene ID" value="ENSBTAG00000030529.3"/>
</dbReference>
<dbReference type="GeneID" id="534006"/>
<dbReference type="KEGG" id="bta:534006"/>
<dbReference type="CTD" id="51307"/>
<dbReference type="VEuPathDB" id="HostDB:ENSBTAG00000030529"/>
<dbReference type="VGNC" id="VGNC:28821">
    <property type="gene designation" value="FAM53C"/>
</dbReference>
<dbReference type="eggNOG" id="ENOG502RW5C">
    <property type="taxonomic scope" value="Eukaryota"/>
</dbReference>
<dbReference type="GeneTree" id="ENSGT00530000063371"/>
<dbReference type="HOGENOM" id="CLU_054215_1_0_1"/>
<dbReference type="InParanoid" id="Q29RM2"/>
<dbReference type="OMA" id="WRGLSHC"/>
<dbReference type="OrthoDB" id="10026856at2759"/>
<dbReference type="TreeFam" id="TF332095"/>
<dbReference type="Proteomes" id="UP000009136">
    <property type="component" value="Chromosome 7"/>
</dbReference>
<dbReference type="Bgee" id="ENSBTAG00000030529">
    <property type="expression patterns" value="Expressed in biceps femoris and 106 other cell types or tissues"/>
</dbReference>
<dbReference type="GO" id="GO:0005634">
    <property type="term" value="C:nucleus"/>
    <property type="evidence" value="ECO:0000318"/>
    <property type="project" value="GO_Central"/>
</dbReference>
<dbReference type="GO" id="GO:0006606">
    <property type="term" value="P:protein import into nucleus"/>
    <property type="evidence" value="ECO:0000318"/>
    <property type="project" value="GO_Central"/>
</dbReference>
<dbReference type="InterPro" id="IPR029356">
    <property type="entry name" value="FAM53"/>
</dbReference>
<dbReference type="PANTHER" id="PTHR28567">
    <property type="entry name" value="PROTEIN FAM53A-LIKE ISOFORM X1"/>
    <property type="match status" value="1"/>
</dbReference>
<dbReference type="PANTHER" id="PTHR28567:SF4">
    <property type="entry name" value="PROTEIN FAM53C"/>
    <property type="match status" value="1"/>
</dbReference>
<dbReference type="Pfam" id="PF15242">
    <property type="entry name" value="FAM53"/>
    <property type="match status" value="1"/>
</dbReference>
<name>FA53C_BOVIN</name>
<sequence length="392" mass="42787">MITLITEQLQKQTLDELKCTRFSISLPLPDHADISNCGNPFQLVSEGASWRGLPHCSCAEFQDSLNLSYHPSGLSLHLRPPSPGSSPQEQSLSQVLSPEPPDPEKLPVPPAPPSKRHCRSLSVPVDLSRWQPVWRPAPSKLWTPIKHRGSGGGGGPQVPHQSPPKRVSSLRFLQAPSASSQCAPAHRPYSPPFFSLALAQDSSHPSAASPQSGSWESDAESLSPCPPQRRFSLSPSLGPQASRFLPSARSSPASSPELPWRPRGLRNLPRSRSQPCDLDARKAGVKRRHEEDPRRLRPSLDFDKMNQKPYSGGLCLQETAREGSSISPPWFMACSPPPLSASCSPIGGSSQVLSESEEEEEGAVRWGRQALSKRTLCQQDFGDLDLNLIEEN</sequence>
<feature type="chain" id="PRO_0000245485" description="Protein FAM53C">
    <location>
        <begin position="1"/>
        <end position="392"/>
    </location>
</feature>
<feature type="region of interest" description="Disordered" evidence="2">
    <location>
        <begin position="76"/>
        <end position="120"/>
    </location>
</feature>
<feature type="region of interest" description="Disordered" evidence="2">
    <location>
        <begin position="141"/>
        <end position="167"/>
    </location>
</feature>
<feature type="region of interest" description="Disordered" evidence="2">
    <location>
        <begin position="201"/>
        <end position="294"/>
    </location>
</feature>
<feature type="compositionally biased region" description="Low complexity" evidence="2">
    <location>
        <begin position="85"/>
        <end position="97"/>
    </location>
</feature>
<feature type="compositionally biased region" description="Polar residues" evidence="2">
    <location>
        <begin position="201"/>
        <end position="215"/>
    </location>
</feature>
<feature type="compositionally biased region" description="Low complexity" evidence="2">
    <location>
        <begin position="241"/>
        <end position="256"/>
    </location>
</feature>
<feature type="compositionally biased region" description="Basic and acidic residues" evidence="2">
    <location>
        <begin position="278"/>
        <end position="294"/>
    </location>
</feature>
<feature type="modified residue" description="N-acetylmethionine" evidence="1">
    <location>
        <position position="1"/>
    </location>
</feature>
<feature type="modified residue" description="Phosphoserine" evidence="1">
    <location>
        <position position="122"/>
    </location>
</feature>
<feature type="modified residue" description="Phosphoserine" evidence="1">
    <location>
        <position position="162"/>
    </location>
</feature>
<feature type="modified residue" description="Phosphoserine" evidence="1">
    <location>
        <position position="232"/>
    </location>
</feature>
<feature type="modified residue" description="Phosphoserine" evidence="1">
    <location>
        <position position="234"/>
    </location>
</feature>
<feature type="modified residue" description="Phosphoserine" evidence="1">
    <location>
        <position position="255"/>
    </location>
</feature>
<feature type="modified residue" description="Phosphoserine" evidence="1">
    <location>
        <position position="273"/>
    </location>
</feature>
<feature type="modified residue" description="Phosphoserine" evidence="1">
    <location>
        <position position="299"/>
    </location>
</feature>
<protein>
    <recommendedName>
        <fullName evidence="1">Protein FAM53C</fullName>
    </recommendedName>
</protein>
<organism>
    <name type="scientific">Bos taurus</name>
    <name type="common">Bovine</name>
    <dbReference type="NCBI Taxonomy" id="9913"/>
    <lineage>
        <taxon>Eukaryota</taxon>
        <taxon>Metazoa</taxon>
        <taxon>Chordata</taxon>
        <taxon>Craniata</taxon>
        <taxon>Vertebrata</taxon>
        <taxon>Euteleostomi</taxon>
        <taxon>Mammalia</taxon>
        <taxon>Eutheria</taxon>
        <taxon>Laurasiatheria</taxon>
        <taxon>Artiodactyla</taxon>
        <taxon>Ruminantia</taxon>
        <taxon>Pecora</taxon>
        <taxon>Bovidae</taxon>
        <taxon>Bovinae</taxon>
        <taxon>Bos</taxon>
    </lineage>
</organism>
<comment type="similarity">
    <text evidence="3">Belongs to the FAM53 family.</text>
</comment>
<gene>
    <name evidence="1" type="primary">FAM53C</name>
</gene>
<accession>Q29RM2</accession>
<keyword id="KW-0007">Acetylation</keyword>
<keyword id="KW-0597">Phosphoprotein</keyword>
<keyword id="KW-1185">Reference proteome</keyword>